<evidence type="ECO:0000250" key="1">
    <source>
        <dbReference type="UniProtKB" id="D0VWQ1"/>
    </source>
</evidence>
<evidence type="ECO:0000250" key="2">
    <source>
        <dbReference type="UniProtKB" id="Q00511"/>
    </source>
</evidence>
<evidence type="ECO:0000255" key="3"/>
<evidence type="ECO:0000269" key="4">
    <source>
    </source>
</evidence>
<evidence type="ECO:0000269" key="5">
    <source ref="3"/>
</evidence>
<evidence type="ECO:0000305" key="6"/>
<evidence type="ECO:0007744" key="7">
    <source>
    </source>
</evidence>
<evidence type="ECO:0007744" key="8">
    <source>
    </source>
</evidence>
<evidence type="ECO:0007744" key="9">
    <source>
    </source>
</evidence>
<evidence type="ECO:0007744" key="10">
    <source>
    </source>
</evidence>
<evidence type="ECO:0007744" key="11">
    <source>
    </source>
</evidence>
<reference key="1">
    <citation type="journal article" date="1989" name="Proc. Natl. Acad. Sci. U.S.A.">
        <title>Urate oxidase: primary structure and evolutionary implications.</title>
        <authorList>
            <person name="Wu X."/>
            <person name="Lee C.C."/>
            <person name="Muzny D.M."/>
            <person name="Caskey C.T."/>
        </authorList>
    </citation>
    <scope>NUCLEOTIDE SEQUENCE [MRNA]</scope>
</reference>
<reference key="2">
    <citation type="journal article" date="2004" name="Genome Res.">
        <title>The status, quality, and expansion of the NIH full-length cDNA project: the Mammalian Gene Collection (MGC).</title>
        <authorList>
            <consortium name="The MGC Project Team"/>
        </authorList>
    </citation>
    <scope>NUCLEOTIDE SEQUENCE [LARGE SCALE MRNA]</scope>
    <source>
        <strain>FVB/N</strain>
        <tissue>Liver</tissue>
    </source>
</reference>
<reference key="3">
    <citation type="submission" date="2005-10" db="UniProtKB">
        <authorList>
            <person name="Kanor S."/>
            <person name="Bienvenut W.V."/>
        </authorList>
    </citation>
    <scope>PROTEIN SEQUENCE OF 2-18; 42-52; 56-80; 86-107; 148-158; 165-185; 188-196; 203-214 AND 221-236</scope>
    <scope>CLEAVAGE OF INITIATOR METHIONINE</scope>
    <scope>ACETYLATION AT ALA-2</scope>
    <scope>IDENTIFICATION BY MASS SPECTROMETRY</scope>
    <source>
        <strain>C57BL/6J</strain>
        <tissue>Liver</tissue>
    </source>
</reference>
<reference key="4">
    <citation type="journal article" date="2007" name="Mol. Cell. Proteomics">
        <title>Mitochondrial phosphoproteome revealed by an improved IMAC method and MS/MS/MS.</title>
        <authorList>
            <person name="Lee J."/>
            <person name="Xu Y."/>
            <person name="Chen Y."/>
            <person name="Sprung R."/>
            <person name="Kim S.C."/>
            <person name="Xie S."/>
            <person name="Zhao Y."/>
        </authorList>
    </citation>
    <scope>PHOSPHORYLATION [LARGE SCALE ANALYSIS] AT SER-39 AND SER-231</scope>
    <scope>IDENTIFICATION BY MASS SPECTROMETRY [LARGE SCALE ANALYSIS]</scope>
    <source>
        <tissue>Liver</tissue>
    </source>
</reference>
<reference key="5">
    <citation type="journal article" date="2007" name="Proc. Natl. Acad. Sci. U.S.A.">
        <title>Large-scale phosphorylation analysis of mouse liver.</title>
        <authorList>
            <person name="Villen J."/>
            <person name="Beausoleil S.A."/>
            <person name="Gerber S.A."/>
            <person name="Gygi S.P."/>
        </authorList>
    </citation>
    <scope>PHOSPHORYLATION [LARGE SCALE ANALYSIS] AT SER-63</scope>
    <scope>IDENTIFICATION BY MASS SPECTROMETRY [LARGE SCALE ANALYSIS]</scope>
    <source>
        <tissue>Liver</tissue>
    </source>
</reference>
<reference key="6">
    <citation type="journal article" date="2010" name="Cell">
        <title>A tissue-specific atlas of mouse protein phosphorylation and expression.</title>
        <authorList>
            <person name="Huttlin E.L."/>
            <person name="Jedrychowski M.P."/>
            <person name="Elias J.E."/>
            <person name="Goswami T."/>
            <person name="Rad R."/>
            <person name="Beausoleil S.A."/>
            <person name="Villen J."/>
            <person name="Haas W."/>
            <person name="Sowa M.E."/>
            <person name="Gygi S.P."/>
        </authorList>
    </citation>
    <scope>PHOSPHORYLATION [LARGE SCALE ANALYSIS] AT TYR-288</scope>
    <scope>IDENTIFICATION BY MASS SPECTROMETRY [LARGE SCALE ANALYSIS]</scope>
    <source>
        <tissue>Liver</tissue>
    </source>
</reference>
<reference key="7">
    <citation type="journal article" date="2012" name="FEBS Lett.">
        <title>SIRT5 deacetylates and activates urate oxidase in liver mitochondria of mice.</title>
        <authorList>
            <person name="Nakamura Y."/>
            <person name="Ogura M."/>
            <person name="Ogura K."/>
            <person name="Tanaka D."/>
            <person name="Inagaki N."/>
        </authorList>
    </citation>
    <scope>SUBCELLULAR LOCATION</scope>
</reference>
<reference key="8">
    <citation type="journal article" date="2013" name="Mol. Cell">
        <title>SIRT5-mediated lysine desuccinylation impacts diverse metabolic pathways.</title>
        <authorList>
            <person name="Park J."/>
            <person name="Chen Y."/>
            <person name="Tishkoff D.X."/>
            <person name="Peng C."/>
            <person name="Tan M."/>
            <person name="Dai L."/>
            <person name="Xie Z."/>
            <person name="Zhang Y."/>
            <person name="Zwaans B.M."/>
            <person name="Skinner M.E."/>
            <person name="Lombard D.B."/>
            <person name="Zhao Y."/>
        </authorList>
    </citation>
    <scope>ACETYLATION [LARGE SCALE ANALYSIS] AT ALA-2</scope>
    <scope>SUCCINYLATION [LARGE SCALE ANALYSIS] AT LYS-10; LYS-23; LYS-220 AND LYS-227</scope>
    <scope>CLEAVAGE OF INITIATOR METHIONINE [LARGE SCALE ANALYSIS]</scope>
    <scope>IDENTIFICATION BY MASS SPECTROMETRY [LARGE SCALE ANALYSIS]</scope>
    <source>
        <tissue>Liver</tissue>
    </source>
</reference>
<reference key="9">
    <citation type="journal article" date="2013" name="Proc. Natl. Acad. Sci. U.S.A.">
        <title>Label-free quantitative proteomics of the lysine acetylome in mitochondria identifies substrates of SIRT3 in metabolic pathways.</title>
        <authorList>
            <person name="Rardin M.J."/>
            <person name="Newman J.C."/>
            <person name="Held J.M."/>
            <person name="Cusack M.P."/>
            <person name="Sorensen D.J."/>
            <person name="Li B."/>
            <person name="Schilling B."/>
            <person name="Mooney S.D."/>
            <person name="Kahn C.R."/>
            <person name="Verdin E."/>
            <person name="Gibson B.W."/>
        </authorList>
    </citation>
    <scope>ACETYLATION [LARGE SCALE ANALYSIS] AT LYS-10; LYS-23; LYS-27; LYS-36; LYS-118; LYS-122; LYS-164; LYS-175; LYS-185; LYS-220; LYS-227 AND LYS-277</scope>
    <scope>IDENTIFICATION BY MASS SPECTROMETRY [LARGE SCALE ANALYSIS]</scope>
    <source>
        <tissue>Liver</tissue>
    </source>
</reference>
<protein>
    <recommendedName>
        <fullName>Uricase</fullName>
        <ecNumber>1.7.3.3</ecNumber>
    </recommendedName>
    <alternativeName>
        <fullName>Urate oxidase</fullName>
    </alternativeName>
</protein>
<feature type="initiator methionine" description="Removed" evidence="5 11">
    <location>
        <position position="1"/>
    </location>
</feature>
<feature type="chain" id="PRO_0000165986" description="Uricase">
    <location>
        <begin position="2"/>
        <end position="303"/>
    </location>
</feature>
<feature type="short sequence motif" description="Microbody targeting signal" evidence="3">
    <location>
        <begin position="301"/>
        <end position="303"/>
    </location>
</feature>
<feature type="active site" description="Charge relay system" evidence="1">
    <location>
        <position position="23"/>
    </location>
</feature>
<feature type="active site" description="Charge relay system" evidence="1">
    <location>
        <position position="68"/>
    </location>
</feature>
<feature type="active site" description="Charge relay system" evidence="1">
    <location>
        <position position="263"/>
    </location>
</feature>
<feature type="binding site" evidence="2">
    <location>
        <position position="68"/>
    </location>
    <ligand>
        <name>urate</name>
        <dbReference type="ChEBI" id="CHEBI:17775"/>
    </ligand>
</feature>
<feature type="binding site" evidence="2">
    <location>
        <position position="69"/>
    </location>
    <ligand>
        <name>urate</name>
        <dbReference type="ChEBI" id="CHEBI:17775"/>
    </ligand>
</feature>
<feature type="binding site" evidence="2">
    <location>
        <position position="170"/>
    </location>
    <ligand>
        <name>urate</name>
        <dbReference type="ChEBI" id="CHEBI:17775"/>
    </ligand>
</feature>
<feature type="binding site" evidence="2">
    <location>
        <position position="187"/>
    </location>
    <ligand>
        <name>urate</name>
        <dbReference type="ChEBI" id="CHEBI:17775"/>
    </ligand>
</feature>
<feature type="binding site" evidence="2">
    <location>
        <position position="234"/>
    </location>
    <ligand>
        <name>urate</name>
        <dbReference type="ChEBI" id="CHEBI:17775"/>
    </ligand>
</feature>
<feature type="binding site" evidence="2">
    <location>
        <position position="235"/>
    </location>
    <ligand>
        <name>urate</name>
        <dbReference type="ChEBI" id="CHEBI:17775"/>
    </ligand>
</feature>
<feature type="binding site" evidence="2">
    <location>
        <position position="261"/>
    </location>
    <ligand>
        <name>urate</name>
        <dbReference type="ChEBI" id="CHEBI:17775"/>
    </ligand>
</feature>
<feature type="modified residue" description="N-acetylalanine" evidence="5 11">
    <location>
        <position position="2"/>
    </location>
</feature>
<feature type="modified residue" description="N6-acetyllysine; alternate" evidence="10">
    <location>
        <position position="10"/>
    </location>
</feature>
<feature type="modified residue" description="N6-succinyllysine; alternate" evidence="11">
    <location>
        <position position="10"/>
    </location>
</feature>
<feature type="modified residue" description="N6-acetyllysine; alternate" evidence="10">
    <location>
        <position position="23"/>
    </location>
</feature>
<feature type="modified residue" description="N6-succinyllysine; alternate" evidence="11">
    <location>
        <position position="23"/>
    </location>
</feature>
<feature type="modified residue" description="N6-acetyllysine" evidence="10">
    <location>
        <position position="27"/>
    </location>
</feature>
<feature type="modified residue" description="N6-acetyllysine" evidence="10">
    <location>
        <position position="36"/>
    </location>
</feature>
<feature type="modified residue" description="Phosphoserine" evidence="7">
    <location>
        <position position="39"/>
    </location>
</feature>
<feature type="modified residue" description="Phosphoserine" evidence="8">
    <location>
        <position position="63"/>
    </location>
</feature>
<feature type="modified residue" description="N6-acetyllysine" evidence="10">
    <location>
        <position position="118"/>
    </location>
</feature>
<feature type="modified residue" description="N6-acetyllysine" evidence="10">
    <location>
        <position position="122"/>
    </location>
</feature>
<feature type="modified residue" description="N6-acetyllysine" evidence="10">
    <location>
        <position position="164"/>
    </location>
</feature>
<feature type="modified residue" description="N6-acetyllysine" evidence="10">
    <location>
        <position position="175"/>
    </location>
</feature>
<feature type="modified residue" description="N6-acetyllysine" evidence="10">
    <location>
        <position position="185"/>
    </location>
</feature>
<feature type="modified residue" description="N6-acetyllysine; alternate" evidence="10">
    <location>
        <position position="220"/>
    </location>
</feature>
<feature type="modified residue" description="N6-succinyllysine; alternate" evidence="11">
    <location>
        <position position="220"/>
    </location>
</feature>
<feature type="modified residue" description="N6-acetyllysine; alternate" evidence="10">
    <location>
        <position position="227"/>
    </location>
</feature>
<feature type="modified residue" description="N6-succinyllysine; alternate" evidence="11">
    <location>
        <position position="227"/>
    </location>
</feature>
<feature type="modified residue" description="Phosphoserine" evidence="7">
    <location>
        <position position="231"/>
    </location>
</feature>
<feature type="modified residue" description="N6-acetyllysine" evidence="10">
    <location>
        <position position="277"/>
    </location>
</feature>
<feature type="modified residue" description="Phosphotyrosine" evidence="9">
    <location>
        <position position="288"/>
    </location>
</feature>
<name>URIC_MOUSE</name>
<dbReference type="EC" id="1.7.3.3"/>
<dbReference type="EMBL" id="M27695">
    <property type="protein sequence ID" value="AAA40538.1"/>
    <property type="molecule type" value="mRNA"/>
</dbReference>
<dbReference type="EMBL" id="BC019771">
    <property type="protein sequence ID" value="AAH19771.1"/>
    <property type="molecule type" value="mRNA"/>
</dbReference>
<dbReference type="CCDS" id="CCDS17905.1"/>
<dbReference type="PIR" id="B36227">
    <property type="entry name" value="B36227"/>
</dbReference>
<dbReference type="RefSeq" id="NP_033500.1">
    <property type="nucleotide sequence ID" value="NM_009474.5"/>
</dbReference>
<dbReference type="SMR" id="P25688"/>
<dbReference type="FunCoup" id="P25688">
    <property type="interactions" value="818"/>
</dbReference>
<dbReference type="IntAct" id="P25688">
    <property type="interactions" value="3"/>
</dbReference>
<dbReference type="MINT" id="P25688"/>
<dbReference type="STRING" id="10090.ENSMUSP00000029837"/>
<dbReference type="GlyGen" id="P25688">
    <property type="glycosylation" value="1 site, 1 O-linked glycan (1 site)"/>
</dbReference>
<dbReference type="iPTMnet" id="P25688"/>
<dbReference type="PhosphoSitePlus" id="P25688"/>
<dbReference type="SwissPalm" id="P25688"/>
<dbReference type="jPOST" id="P25688"/>
<dbReference type="PaxDb" id="10090-ENSMUSP00000029837"/>
<dbReference type="PeptideAtlas" id="P25688"/>
<dbReference type="ProteomicsDB" id="300192"/>
<dbReference type="DNASU" id="22262"/>
<dbReference type="Ensembl" id="ENSMUST00000029837.14">
    <property type="protein sequence ID" value="ENSMUSP00000029837.8"/>
    <property type="gene ID" value="ENSMUSG00000028186.15"/>
</dbReference>
<dbReference type="GeneID" id="22262"/>
<dbReference type="KEGG" id="mmu:22262"/>
<dbReference type="UCSC" id="uc008rrp.1">
    <property type="organism name" value="mouse"/>
</dbReference>
<dbReference type="AGR" id="MGI:98907"/>
<dbReference type="CTD" id="391051"/>
<dbReference type="MGI" id="MGI:98907">
    <property type="gene designation" value="Uox"/>
</dbReference>
<dbReference type="VEuPathDB" id="HostDB:ENSMUSG00000028186"/>
<dbReference type="eggNOG" id="KOG1599">
    <property type="taxonomic scope" value="Eukaryota"/>
</dbReference>
<dbReference type="GeneTree" id="ENSGT00940000153229"/>
<dbReference type="InParanoid" id="P25688"/>
<dbReference type="OMA" id="ATMYKMS"/>
<dbReference type="OrthoDB" id="9992118at2759"/>
<dbReference type="PhylomeDB" id="P25688"/>
<dbReference type="TreeFam" id="TF323438"/>
<dbReference type="UniPathway" id="UPA00394">
    <property type="reaction ID" value="UER00650"/>
</dbReference>
<dbReference type="BioGRID-ORCS" id="22262">
    <property type="hits" value="0 hits in 75 CRISPR screens"/>
</dbReference>
<dbReference type="ChiTaRS" id="Uox">
    <property type="organism name" value="mouse"/>
</dbReference>
<dbReference type="PRO" id="PR:P25688"/>
<dbReference type="Proteomes" id="UP000000589">
    <property type="component" value="Chromosome 3"/>
</dbReference>
<dbReference type="RNAct" id="P25688">
    <property type="molecule type" value="protein"/>
</dbReference>
<dbReference type="Bgee" id="ENSMUSG00000028186">
    <property type="expression patterns" value="Expressed in gall bladder and 74 other cell types or tissues"/>
</dbReference>
<dbReference type="ExpressionAtlas" id="P25688">
    <property type="expression patterns" value="baseline and differential"/>
</dbReference>
<dbReference type="GO" id="GO:0005829">
    <property type="term" value="C:cytosol"/>
    <property type="evidence" value="ECO:0000304"/>
    <property type="project" value="Reactome"/>
</dbReference>
<dbReference type="GO" id="GO:0005739">
    <property type="term" value="C:mitochondrion"/>
    <property type="evidence" value="ECO:0007005"/>
    <property type="project" value="MGI"/>
</dbReference>
<dbReference type="GO" id="GO:0005777">
    <property type="term" value="C:peroxisome"/>
    <property type="evidence" value="ECO:0000314"/>
    <property type="project" value="MGI"/>
</dbReference>
<dbReference type="GO" id="GO:0004846">
    <property type="term" value="F:urate oxidase activity"/>
    <property type="evidence" value="ECO:0000314"/>
    <property type="project" value="MGI"/>
</dbReference>
<dbReference type="GO" id="GO:0006154">
    <property type="term" value="P:adenosine catabolic process"/>
    <property type="evidence" value="ECO:0000314"/>
    <property type="project" value="MGI"/>
</dbReference>
<dbReference type="GO" id="GO:0000255">
    <property type="term" value="P:allantoin metabolic process"/>
    <property type="evidence" value="ECO:0000314"/>
    <property type="project" value="MGI"/>
</dbReference>
<dbReference type="GO" id="GO:0043605">
    <property type="term" value="P:amide catabolic process"/>
    <property type="evidence" value="ECO:0000314"/>
    <property type="project" value="MGI"/>
</dbReference>
<dbReference type="GO" id="GO:0006196">
    <property type="term" value="P:AMP catabolic process"/>
    <property type="evidence" value="ECO:0000314"/>
    <property type="project" value="MGI"/>
</dbReference>
<dbReference type="GO" id="GO:0046059">
    <property type="term" value="P:dAMP catabolic process"/>
    <property type="evidence" value="ECO:0000314"/>
    <property type="project" value="MGI"/>
</dbReference>
<dbReference type="GO" id="GO:0006157">
    <property type="term" value="P:deoxyadenosine catabolic process"/>
    <property type="evidence" value="ECO:0000314"/>
    <property type="project" value="MGI"/>
</dbReference>
<dbReference type="GO" id="GO:0006161">
    <property type="term" value="P:deoxyguanosine catabolic process"/>
    <property type="evidence" value="ECO:0000314"/>
    <property type="project" value="MGI"/>
</dbReference>
<dbReference type="GO" id="GO:0006149">
    <property type="term" value="P:deoxyinosine catabolic process"/>
    <property type="evidence" value="ECO:0000314"/>
    <property type="project" value="MGI"/>
</dbReference>
<dbReference type="GO" id="GO:0046055">
    <property type="term" value="P:dGMP catabolic process"/>
    <property type="evidence" value="ECO:0000314"/>
    <property type="project" value="MGI"/>
</dbReference>
<dbReference type="GO" id="GO:0046038">
    <property type="term" value="P:GMP catabolic process"/>
    <property type="evidence" value="ECO:0000314"/>
    <property type="project" value="MGI"/>
</dbReference>
<dbReference type="GO" id="GO:0006147">
    <property type="term" value="P:guanine catabolic process"/>
    <property type="evidence" value="ECO:0000314"/>
    <property type="project" value="MGI"/>
</dbReference>
<dbReference type="GO" id="GO:0009114">
    <property type="term" value="P:hypoxanthine catabolic process"/>
    <property type="evidence" value="ECO:0000314"/>
    <property type="project" value="MGI"/>
</dbReference>
<dbReference type="GO" id="GO:0006204">
    <property type="term" value="P:IMP catabolic process"/>
    <property type="evidence" value="ECO:0000314"/>
    <property type="project" value="MGI"/>
</dbReference>
<dbReference type="GO" id="GO:0006148">
    <property type="term" value="P:inosine catabolic process"/>
    <property type="evidence" value="ECO:0000314"/>
    <property type="project" value="MGI"/>
</dbReference>
<dbReference type="GO" id="GO:0006144">
    <property type="term" value="P:purine nucleobase metabolic process"/>
    <property type="evidence" value="ECO:0000304"/>
    <property type="project" value="MGI"/>
</dbReference>
<dbReference type="GO" id="GO:0019628">
    <property type="term" value="P:urate catabolic process"/>
    <property type="evidence" value="ECO:0000314"/>
    <property type="project" value="MGI"/>
</dbReference>
<dbReference type="GO" id="GO:0009115">
    <property type="term" value="P:xanthine catabolic process"/>
    <property type="evidence" value="ECO:0000314"/>
    <property type="project" value="MGI"/>
</dbReference>
<dbReference type="CDD" id="cd00445">
    <property type="entry name" value="Uricase"/>
    <property type="match status" value="1"/>
</dbReference>
<dbReference type="FunFam" id="3.10.270.10:FF:000001">
    <property type="entry name" value="Uricase"/>
    <property type="match status" value="1"/>
</dbReference>
<dbReference type="Gene3D" id="3.10.270.10">
    <property type="entry name" value="Urate Oxidase"/>
    <property type="match status" value="1"/>
</dbReference>
<dbReference type="InterPro" id="IPR002042">
    <property type="entry name" value="Uricase"/>
</dbReference>
<dbReference type="InterPro" id="IPR019842">
    <property type="entry name" value="Uricase_CS"/>
</dbReference>
<dbReference type="NCBIfam" id="TIGR03383">
    <property type="entry name" value="urate_oxi"/>
    <property type="match status" value="1"/>
</dbReference>
<dbReference type="PANTHER" id="PTHR42874">
    <property type="entry name" value="URICASE"/>
    <property type="match status" value="1"/>
</dbReference>
<dbReference type="PANTHER" id="PTHR42874:SF1">
    <property type="entry name" value="URICASE"/>
    <property type="match status" value="1"/>
</dbReference>
<dbReference type="Pfam" id="PF01014">
    <property type="entry name" value="Uricase"/>
    <property type="match status" value="2"/>
</dbReference>
<dbReference type="PIRSF" id="PIRSF000241">
    <property type="entry name" value="Urate_oxidase"/>
    <property type="match status" value="1"/>
</dbReference>
<dbReference type="PRINTS" id="PR00093">
    <property type="entry name" value="URICASE"/>
</dbReference>
<dbReference type="SUPFAM" id="SSF55620">
    <property type="entry name" value="Tetrahydrobiopterin biosynthesis enzymes-like"/>
    <property type="match status" value="2"/>
</dbReference>
<dbReference type="PROSITE" id="PS00366">
    <property type="entry name" value="URICASE"/>
    <property type="match status" value="1"/>
</dbReference>
<gene>
    <name type="primary">Uox</name>
</gene>
<sequence>MAHYHDNYGKNDEVEFVRTGYGKDMVKVLHIQRDGKYHSIKEVATSVQLTLRSKKDYLHGDNSDIIPTDTIKNTVHVLAKLRGIRNIETFAMNICEHFLSSFNHVTRAHVYVEEVPWKRFEKNGIKHVHAFIHTPTGTHFCEVEQMRNGPPVIHSGIKDLKVLKTTQSGFEGFLKDQFTTLPEVKDRCFATQVYCKWRYQRRDVDFEAIWGAVRDIVLQKFAGPYDKGEYSPSVQKTLYDIQVLSLSQLPEIEDMEISLPNIHYFNIDMSKMGLINKEEVLLPLDNPYGKITGTVKRKLPSRL</sequence>
<organism>
    <name type="scientific">Mus musculus</name>
    <name type="common">Mouse</name>
    <dbReference type="NCBI Taxonomy" id="10090"/>
    <lineage>
        <taxon>Eukaryota</taxon>
        <taxon>Metazoa</taxon>
        <taxon>Chordata</taxon>
        <taxon>Craniata</taxon>
        <taxon>Vertebrata</taxon>
        <taxon>Euteleostomi</taxon>
        <taxon>Mammalia</taxon>
        <taxon>Eutheria</taxon>
        <taxon>Euarchontoglires</taxon>
        <taxon>Glires</taxon>
        <taxon>Rodentia</taxon>
        <taxon>Myomorpha</taxon>
        <taxon>Muroidea</taxon>
        <taxon>Muridae</taxon>
        <taxon>Murinae</taxon>
        <taxon>Mus</taxon>
        <taxon>Mus</taxon>
    </lineage>
</organism>
<keyword id="KW-0007">Acetylation</keyword>
<keyword id="KW-0903">Direct protein sequencing</keyword>
<keyword id="KW-0496">Mitochondrion</keyword>
<keyword id="KW-0560">Oxidoreductase</keyword>
<keyword id="KW-0576">Peroxisome</keyword>
<keyword id="KW-0597">Phosphoprotein</keyword>
<keyword id="KW-0659">Purine metabolism</keyword>
<keyword id="KW-1185">Reference proteome</keyword>
<proteinExistence type="evidence at protein level"/>
<accession>P25688</accession>
<comment type="function">
    <text>Catalyzes the oxidation of uric acid to 5-hydroxyisourate, which is further processed to form (S)-allantoin.</text>
</comment>
<comment type="catalytic activity">
    <reaction>
        <text>urate + O2 + H2O = 5-hydroxyisourate + H2O2</text>
        <dbReference type="Rhea" id="RHEA:21368"/>
        <dbReference type="ChEBI" id="CHEBI:15377"/>
        <dbReference type="ChEBI" id="CHEBI:15379"/>
        <dbReference type="ChEBI" id="CHEBI:16240"/>
        <dbReference type="ChEBI" id="CHEBI:17775"/>
        <dbReference type="ChEBI" id="CHEBI:18072"/>
        <dbReference type="EC" id="1.7.3.3"/>
    </reaction>
</comment>
<comment type="pathway">
    <text>Purine metabolism; urate degradation; (S)-allantoin from urate: step 1/3.</text>
</comment>
<comment type="subcellular location">
    <subcellularLocation>
        <location evidence="4">Peroxisome</location>
    </subcellularLocation>
    <subcellularLocation>
        <location evidence="4">Mitochondrion</location>
    </subcellularLocation>
</comment>
<comment type="PTM">
    <text evidence="4 5">Acetylation of Lys-118, Lys-164 and Lys-290 is observed in liver mitochondria from fasted mice but not from fed mice. May be deacetylated by Sirt5; however it is unclear whether Sirt5 mediates deacetylation or desuccinylation of Uox; additional evidence is required to validate these results (PubMed:23085393).</text>
</comment>
<comment type="similarity">
    <text evidence="6">Belongs to the uricase family.</text>
</comment>